<name>MUTS_CAUSK</name>
<proteinExistence type="inferred from homology"/>
<organism>
    <name type="scientific">Caulobacter sp. (strain K31)</name>
    <dbReference type="NCBI Taxonomy" id="366602"/>
    <lineage>
        <taxon>Bacteria</taxon>
        <taxon>Pseudomonadati</taxon>
        <taxon>Pseudomonadota</taxon>
        <taxon>Alphaproteobacteria</taxon>
        <taxon>Caulobacterales</taxon>
        <taxon>Caulobacteraceae</taxon>
        <taxon>Caulobacter</taxon>
    </lineage>
</organism>
<keyword id="KW-0067">ATP-binding</keyword>
<keyword id="KW-0227">DNA damage</keyword>
<keyword id="KW-0234">DNA repair</keyword>
<keyword id="KW-0238">DNA-binding</keyword>
<keyword id="KW-0547">Nucleotide-binding</keyword>
<reference key="1">
    <citation type="submission" date="2008-01" db="EMBL/GenBank/DDBJ databases">
        <title>Complete sequence of chromosome of Caulobacter sp. K31.</title>
        <authorList>
            <consortium name="US DOE Joint Genome Institute"/>
            <person name="Copeland A."/>
            <person name="Lucas S."/>
            <person name="Lapidus A."/>
            <person name="Barry K."/>
            <person name="Glavina del Rio T."/>
            <person name="Dalin E."/>
            <person name="Tice H."/>
            <person name="Pitluck S."/>
            <person name="Bruce D."/>
            <person name="Goodwin L."/>
            <person name="Thompson L.S."/>
            <person name="Brettin T."/>
            <person name="Detter J.C."/>
            <person name="Han C."/>
            <person name="Schmutz J."/>
            <person name="Larimer F."/>
            <person name="Land M."/>
            <person name="Hauser L."/>
            <person name="Kyrpides N."/>
            <person name="Kim E."/>
            <person name="Stephens C."/>
            <person name="Richardson P."/>
        </authorList>
    </citation>
    <scope>NUCLEOTIDE SEQUENCE [LARGE SCALE GENOMIC DNA]</scope>
    <source>
        <strain>K31</strain>
    </source>
</reference>
<comment type="function">
    <text evidence="1">This protein is involved in the repair of mismatches in DNA. It is possible that it carries out the mismatch recognition step. This protein has a weak ATPase activity.</text>
</comment>
<comment type="similarity">
    <text evidence="1">Belongs to the DNA mismatch repair MutS family.</text>
</comment>
<dbReference type="EMBL" id="CP000927">
    <property type="protein sequence ID" value="ABZ69146.1"/>
    <property type="molecule type" value="Genomic_DNA"/>
</dbReference>
<dbReference type="SMR" id="B0T142"/>
<dbReference type="STRING" id="366602.Caul_0008"/>
<dbReference type="KEGG" id="cak:Caul_0008"/>
<dbReference type="eggNOG" id="COG0249">
    <property type="taxonomic scope" value="Bacteria"/>
</dbReference>
<dbReference type="HOGENOM" id="CLU_002472_4_0_5"/>
<dbReference type="OrthoDB" id="9802448at2"/>
<dbReference type="GO" id="GO:0005829">
    <property type="term" value="C:cytosol"/>
    <property type="evidence" value="ECO:0007669"/>
    <property type="project" value="TreeGrafter"/>
</dbReference>
<dbReference type="GO" id="GO:0005524">
    <property type="term" value="F:ATP binding"/>
    <property type="evidence" value="ECO:0007669"/>
    <property type="project" value="UniProtKB-UniRule"/>
</dbReference>
<dbReference type="GO" id="GO:0140664">
    <property type="term" value="F:ATP-dependent DNA damage sensor activity"/>
    <property type="evidence" value="ECO:0007669"/>
    <property type="project" value="InterPro"/>
</dbReference>
<dbReference type="GO" id="GO:0003684">
    <property type="term" value="F:damaged DNA binding"/>
    <property type="evidence" value="ECO:0007669"/>
    <property type="project" value="UniProtKB-UniRule"/>
</dbReference>
<dbReference type="GO" id="GO:0030983">
    <property type="term" value="F:mismatched DNA binding"/>
    <property type="evidence" value="ECO:0007669"/>
    <property type="project" value="InterPro"/>
</dbReference>
<dbReference type="GO" id="GO:0006298">
    <property type="term" value="P:mismatch repair"/>
    <property type="evidence" value="ECO:0007669"/>
    <property type="project" value="UniProtKB-UniRule"/>
</dbReference>
<dbReference type="CDD" id="cd03284">
    <property type="entry name" value="ABC_MutS1"/>
    <property type="match status" value="1"/>
</dbReference>
<dbReference type="FunFam" id="3.40.1170.10:FF:000001">
    <property type="entry name" value="DNA mismatch repair protein MutS"/>
    <property type="match status" value="1"/>
</dbReference>
<dbReference type="Gene3D" id="1.10.1420.10">
    <property type="match status" value="2"/>
</dbReference>
<dbReference type="Gene3D" id="6.10.140.430">
    <property type="match status" value="1"/>
</dbReference>
<dbReference type="Gene3D" id="3.40.1170.10">
    <property type="entry name" value="DNA repair protein MutS, domain I"/>
    <property type="match status" value="1"/>
</dbReference>
<dbReference type="Gene3D" id="3.30.420.110">
    <property type="entry name" value="MutS, connector domain"/>
    <property type="match status" value="1"/>
</dbReference>
<dbReference type="Gene3D" id="3.40.50.300">
    <property type="entry name" value="P-loop containing nucleotide triphosphate hydrolases"/>
    <property type="match status" value="1"/>
</dbReference>
<dbReference type="HAMAP" id="MF_00096">
    <property type="entry name" value="MutS"/>
    <property type="match status" value="1"/>
</dbReference>
<dbReference type="InterPro" id="IPR005748">
    <property type="entry name" value="DNA_mismatch_repair_MutS"/>
</dbReference>
<dbReference type="InterPro" id="IPR007695">
    <property type="entry name" value="DNA_mismatch_repair_MutS-lik_N"/>
</dbReference>
<dbReference type="InterPro" id="IPR017261">
    <property type="entry name" value="DNA_mismatch_repair_MutS/MSH"/>
</dbReference>
<dbReference type="InterPro" id="IPR000432">
    <property type="entry name" value="DNA_mismatch_repair_MutS_C"/>
</dbReference>
<dbReference type="InterPro" id="IPR007861">
    <property type="entry name" value="DNA_mismatch_repair_MutS_clamp"/>
</dbReference>
<dbReference type="InterPro" id="IPR007696">
    <property type="entry name" value="DNA_mismatch_repair_MutS_core"/>
</dbReference>
<dbReference type="InterPro" id="IPR016151">
    <property type="entry name" value="DNA_mismatch_repair_MutS_N"/>
</dbReference>
<dbReference type="InterPro" id="IPR036187">
    <property type="entry name" value="DNA_mismatch_repair_MutS_sf"/>
</dbReference>
<dbReference type="InterPro" id="IPR007860">
    <property type="entry name" value="DNA_mmatch_repair_MutS_con_dom"/>
</dbReference>
<dbReference type="InterPro" id="IPR045076">
    <property type="entry name" value="MutS"/>
</dbReference>
<dbReference type="InterPro" id="IPR036678">
    <property type="entry name" value="MutS_con_dom_sf"/>
</dbReference>
<dbReference type="InterPro" id="IPR027417">
    <property type="entry name" value="P-loop_NTPase"/>
</dbReference>
<dbReference type="NCBIfam" id="TIGR01070">
    <property type="entry name" value="mutS1"/>
    <property type="match status" value="1"/>
</dbReference>
<dbReference type="NCBIfam" id="NF003810">
    <property type="entry name" value="PRK05399.1"/>
    <property type="match status" value="1"/>
</dbReference>
<dbReference type="PANTHER" id="PTHR11361:SF34">
    <property type="entry name" value="DNA MISMATCH REPAIR PROTEIN MSH1, MITOCHONDRIAL"/>
    <property type="match status" value="1"/>
</dbReference>
<dbReference type="PANTHER" id="PTHR11361">
    <property type="entry name" value="DNA MISMATCH REPAIR PROTEIN MUTS FAMILY MEMBER"/>
    <property type="match status" value="1"/>
</dbReference>
<dbReference type="Pfam" id="PF01624">
    <property type="entry name" value="MutS_I"/>
    <property type="match status" value="1"/>
</dbReference>
<dbReference type="Pfam" id="PF05188">
    <property type="entry name" value="MutS_II"/>
    <property type="match status" value="1"/>
</dbReference>
<dbReference type="Pfam" id="PF05192">
    <property type="entry name" value="MutS_III"/>
    <property type="match status" value="1"/>
</dbReference>
<dbReference type="Pfam" id="PF05190">
    <property type="entry name" value="MutS_IV"/>
    <property type="match status" value="1"/>
</dbReference>
<dbReference type="Pfam" id="PF00488">
    <property type="entry name" value="MutS_V"/>
    <property type="match status" value="1"/>
</dbReference>
<dbReference type="PIRSF" id="PIRSF037677">
    <property type="entry name" value="DNA_mis_repair_Msh6"/>
    <property type="match status" value="1"/>
</dbReference>
<dbReference type="SMART" id="SM00534">
    <property type="entry name" value="MUTSac"/>
    <property type="match status" value="1"/>
</dbReference>
<dbReference type="SMART" id="SM00533">
    <property type="entry name" value="MUTSd"/>
    <property type="match status" value="1"/>
</dbReference>
<dbReference type="SUPFAM" id="SSF55271">
    <property type="entry name" value="DNA repair protein MutS, domain I"/>
    <property type="match status" value="1"/>
</dbReference>
<dbReference type="SUPFAM" id="SSF53150">
    <property type="entry name" value="DNA repair protein MutS, domain II"/>
    <property type="match status" value="1"/>
</dbReference>
<dbReference type="SUPFAM" id="SSF48334">
    <property type="entry name" value="DNA repair protein MutS, domain III"/>
    <property type="match status" value="1"/>
</dbReference>
<dbReference type="SUPFAM" id="SSF52540">
    <property type="entry name" value="P-loop containing nucleoside triphosphate hydrolases"/>
    <property type="match status" value="1"/>
</dbReference>
<dbReference type="PROSITE" id="PS00486">
    <property type="entry name" value="DNA_MISMATCH_REPAIR_2"/>
    <property type="match status" value="1"/>
</dbReference>
<sequence>MNAPASPAVQTYDATGATPVMQQFFEMKARHPDALIFFRMGDFYELFFDDAYKAAAALGISQTFRGTHNGQPIPMAGVPQHAAEAYLSKLIRLGFKVAVCEQMEDPAEARKRGSKSVVRRDIVRVVTPGTLTEDGLLDARGANRLAAVAIRAGQAAVAAVELSTGEVECFLVAKDAVGAILAALAPSETLVADRLLSDDLLAQTLKICGGLIQPMPSALSEPQASETRVKRLYGVDTLDGFGGLSAAEIGALGLIAAHLEMTQAGKLPALRAPRRAAEADVMSIDPATRSSLEIDRAQNGDRSGSLLAAIDRTVTAGGARMLASRLARPLLDPHAIDARLDAVEWFVDHRGLRERLREVLKGAGDMARALSRLALGRGGPRDLGCLKDGLKTGEKLAGMVGGSGDPLSPPPAQLEGALKALTPSLQEGLSRLLAQLETGLGPDLPALARDGGYVAAGVRPELDQARALRDDSRRVVAALESRLIQESGVPLKIRHNGVLGYFVEATAGKADPLFQPPLNATFIHRQTLANQVRFTTVELADLDARIAQAAERALAMEVAAFEDWRAEAVALAEPIQLAAEALAKLDVAAALAEWAEDAGAVRPSVDKSLAFEARAARHPVVEAAVKRAGDPYTPNDCCLDAAGERGARLSIVTGPNMAGKSTFLRQNAILAILAQSGCYVPAKSLRLGVIDRLFSRVGAGDDLARGRSTFMMEMVETAAILTQASPRSLVILDEIGRGTATYDGLAIAWACAEALHDTNRCRALFATHYHELATLETRLAHVSNLSLRAKEWNGDLVFLHEAAAGPADRSYGVQVAKLAGVPPAVVARAKEVLDRLESKTESPARLDDLPLFASHAPGPLNQFGAPVQAAPSRTDAALGDLDVDGMSPREALDALYRLKALLKT</sequence>
<feature type="chain" id="PRO_0000335133" description="DNA mismatch repair protein MutS">
    <location>
        <begin position="1"/>
        <end position="904"/>
    </location>
</feature>
<feature type="binding site" evidence="1">
    <location>
        <begin position="654"/>
        <end position="661"/>
    </location>
    <ligand>
        <name>ATP</name>
        <dbReference type="ChEBI" id="CHEBI:30616"/>
    </ligand>
</feature>
<gene>
    <name evidence="1" type="primary">mutS</name>
    <name type="ordered locus">Caul_0008</name>
</gene>
<evidence type="ECO:0000255" key="1">
    <source>
        <dbReference type="HAMAP-Rule" id="MF_00096"/>
    </source>
</evidence>
<protein>
    <recommendedName>
        <fullName evidence="1">DNA mismatch repair protein MutS</fullName>
    </recommendedName>
</protein>
<accession>B0T142</accession>